<reference key="1">
    <citation type="journal article" date="2001" name="Infect. Immun.">
        <title>Characterization of the groESL operon in Listeria monocytogenes: utilization of two reporter systems (gfp and hly) for evaluating in vivo expression.</title>
        <authorList>
            <person name="Gahan C.G."/>
            <person name="O'Mahony J."/>
            <person name="Hill C."/>
        </authorList>
    </citation>
    <scope>NUCLEOTIDE SEQUENCE [GENOMIC DNA]</scope>
    <source>
        <strain>LO28 / Serovar 1/2c</strain>
    </source>
</reference>
<reference key="2">
    <citation type="journal article" date="2001" name="Science">
        <title>Comparative genomics of Listeria species.</title>
        <authorList>
            <person name="Glaser P."/>
            <person name="Frangeul L."/>
            <person name="Buchrieser C."/>
            <person name="Rusniok C."/>
            <person name="Amend A."/>
            <person name="Baquero F."/>
            <person name="Berche P."/>
            <person name="Bloecker H."/>
            <person name="Brandt P."/>
            <person name="Chakraborty T."/>
            <person name="Charbit A."/>
            <person name="Chetouani F."/>
            <person name="Couve E."/>
            <person name="de Daruvar A."/>
            <person name="Dehoux P."/>
            <person name="Domann E."/>
            <person name="Dominguez-Bernal G."/>
            <person name="Duchaud E."/>
            <person name="Durant L."/>
            <person name="Dussurget O."/>
            <person name="Entian K.-D."/>
            <person name="Fsihi H."/>
            <person name="Garcia-del Portillo F."/>
            <person name="Garrido P."/>
            <person name="Gautier L."/>
            <person name="Goebel W."/>
            <person name="Gomez-Lopez N."/>
            <person name="Hain T."/>
            <person name="Hauf J."/>
            <person name="Jackson D."/>
            <person name="Jones L.-M."/>
            <person name="Kaerst U."/>
            <person name="Kreft J."/>
            <person name="Kuhn M."/>
            <person name="Kunst F."/>
            <person name="Kurapkat G."/>
            <person name="Madueno E."/>
            <person name="Maitournam A."/>
            <person name="Mata Vicente J."/>
            <person name="Ng E."/>
            <person name="Nedjari H."/>
            <person name="Nordsiek G."/>
            <person name="Novella S."/>
            <person name="de Pablos B."/>
            <person name="Perez-Diaz J.-C."/>
            <person name="Purcell R."/>
            <person name="Remmel B."/>
            <person name="Rose M."/>
            <person name="Schlueter T."/>
            <person name="Simoes N."/>
            <person name="Tierrez A."/>
            <person name="Vazquez-Boland J.-A."/>
            <person name="Voss H."/>
            <person name="Wehland J."/>
            <person name="Cossart P."/>
        </authorList>
    </citation>
    <scope>NUCLEOTIDE SEQUENCE [LARGE SCALE GENOMIC DNA]</scope>
    <source>
        <strain>ATCC BAA-679 / EGD-e</strain>
    </source>
</reference>
<accession>Q9AGE6</accession>
<protein>
    <recommendedName>
        <fullName evidence="1">Chaperonin GroEL</fullName>
        <ecNumber evidence="1">5.6.1.7</ecNumber>
    </recommendedName>
    <alternativeName>
        <fullName evidence="1">60 kDa chaperonin</fullName>
    </alternativeName>
    <alternativeName>
        <fullName evidence="1">Chaperonin-60</fullName>
        <shortName evidence="1">Cpn60</shortName>
    </alternativeName>
</protein>
<comment type="function">
    <text evidence="1">Together with its co-chaperonin GroES, plays an essential role in assisting protein folding. The GroEL-GroES system forms a nano-cage that allows encapsulation of the non-native substrate proteins and provides a physical environment optimized to promote and accelerate protein folding.</text>
</comment>
<comment type="catalytic activity">
    <reaction evidence="1">
        <text>ATP + H2O + a folded polypeptide = ADP + phosphate + an unfolded polypeptide.</text>
        <dbReference type="EC" id="5.6.1.7"/>
    </reaction>
</comment>
<comment type="subunit">
    <text evidence="1">Forms a cylinder of 14 subunits composed of two heptameric rings stacked back-to-back. Interacts with the co-chaperonin GroES.</text>
</comment>
<comment type="subcellular location">
    <subcellularLocation>
        <location evidence="1">Cytoplasm</location>
    </subcellularLocation>
</comment>
<comment type="similarity">
    <text evidence="1">Belongs to the chaperonin (HSP60) family.</text>
</comment>
<proteinExistence type="inferred from homology"/>
<gene>
    <name evidence="1" type="primary">groEL</name>
    <name evidence="1" type="synonym">groL</name>
    <name type="ordered locus">lmo2068</name>
</gene>
<name>CH60_LISMO</name>
<evidence type="ECO:0000255" key="1">
    <source>
        <dbReference type="HAMAP-Rule" id="MF_00600"/>
    </source>
</evidence>
<evidence type="ECO:0000256" key="2">
    <source>
        <dbReference type="SAM" id="MobiDB-lite"/>
    </source>
</evidence>
<feature type="chain" id="PRO_0000063414" description="Chaperonin GroEL">
    <location>
        <begin position="1"/>
        <end position="542"/>
    </location>
</feature>
<feature type="region of interest" description="Disordered" evidence="2">
    <location>
        <begin position="522"/>
        <end position="542"/>
    </location>
</feature>
<feature type="binding site" evidence="1">
    <location>
        <begin position="29"/>
        <end position="32"/>
    </location>
    <ligand>
        <name>ATP</name>
        <dbReference type="ChEBI" id="CHEBI:30616"/>
    </ligand>
</feature>
<feature type="binding site" evidence="1">
    <location>
        <begin position="86"/>
        <end position="90"/>
    </location>
    <ligand>
        <name>ATP</name>
        <dbReference type="ChEBI" id="CHEBI:30616"/>
    </ligand>
</feature>
<feature type="binding site" evidence="1">
    <location>
        <position position="413"/>
    </location>
    <ligand>
        <name>ATP</name>
        <dbReference type="ChEBI" id="CHEBI:30616"/>
    </ligand>
</feature>
<feature type="binding site" evidence="1">
    <location>
        <begin position="476"/>
        <end position="478"/>
    </location>
    <ligand>
        <name>ATP</name>
        <dbReference type="ChEBI" id="CHEBI:30616"/>
    </ligand>
</feature>
<feature type="binding site" evidence="1">
    <location>
        <position position="492"/>
    </location>
    <ligand>
        <name>ATP</name>
        <dbReference type="ChEBI" id="CHEBI:30616"/>
    </ligand>
</feature>
<organism>
    <name type="scientific">Listeria monocytogenes serovar 1/2a (strain ATCC BAA-679 / EGD-e)</name>
    <dbReference type="NCBI Taxonomy" id="169963"/>
    <lineage>
        <taxon>Bacteria</taxon>
        <taxon>Bacillati</taxon>
        <taxon>Bacillota</taxon>
        <taxon>Bacilli</taxon>
        <taxon>Bacillales</taxon>
        <taxon>Listeriaceae</taxon>
        <taxon>Listeria</taxon>
    </lineage>
</organism>
<sequence>MAKDIKFSEDARRAMLRGVDQLANAVKVTLGPKGRNVVLEKKFGSPLITNDGVTIAKEIELEDPFENMGAKLVSEVASKTNDVAGDGTTTATVLAQAMIQEGLKNVTAGANPVGVRRGIEKAVATAIEELKAISKPIESKESIAQVAAISSGDEEVGKLIAEAMERVGNDGVITIEESKGFATELDVVEGMQFDRGYTSPYMVTDSDKMEAVLEKPYILITDKKINNIQEILPVLEQVVQQGRPMLIIAEDVEGEAQATLVLNKLRGTFNVVAVKAPGFGDRRKAMLEDIAILTGGQVITEDLGLELKTATVDQLGTANKVVVTKDDTTIVEGAGDSTQISARVNQIRAQMEETTSEFDREKLQERLAKLAGGVAVVKVGAATETELKERKLRIEDALNSTRAAVEEGIVAGGGTALVSIYNKVAALEAEGDVETGINIVLRSLEEPVRQIAHNAGLEGSVIVERLKHEAVGVGFNAANGEWVNMIDAGIVDPTKVTRSALQNASSVAALLLTTEAVVADKPDENGPAAVPDMGMGGMGGMM</sequence>
<keyword id="KW-0067">ATP-binding</keyword>
<keyword id="KW-0143">Chaperone</keyword>
<keyword id="KW-0963">Cytoplasm</keyword>
<keyword id="KW-0413">Isomerase</keyword>
<keyword id="KW-0547">Nucleotide-binding</keyword>
<keyword id="KW-1185">Reference proteome</keyword>
<dbReference type="EC" id="5.6.1.7" evidence="1"/>
<dbReference type="EMBL" id="AF335323">
    <property type="protein sequence ID" value="AAK28538.1"/>
    <property type="molecule type" value="Genomic_DNA"/>
</dbReference>
<dbReference type="EMBL" id="AL591982">
    <property type="protein sequence ID" value="CAD00146.1"/>
    <property type="molecule type" value="Genomic_DNA"/>
</dbReference>
<dbReference type="PIR" id="AD1333">
    <property type="entry name" value="AD1333"/>
</dbReference>
<dbReference type="RefSeq" id="NP_465592.1">
    <property type="nucleotide sequence ID" value="NC_003210.1"/>
</dbReference>
<dbReference type="RefSeq" id="WP_003726503.1">
    <property type="nucleotide sequence ID" value="NZ_CP149495.1"/>
</dbReference>
<dbReference type="SMR" id="Q9AGE6"/>
<dbReference type="STRING" id="169963.gene:17594753"/>
<dbReference type="PaxDb" id="169963-lmo2068"/>
<dbReference type="EnsemblBacteria" id="CAD00146">
    <property type="protein sequence ID" value="CAD00146"/>
    <property type="gene ID" value="CAD00146"/>
</dbReference>
<dbReference type="GeneID" id="987925"/>
<dbReference type="KEGG" id="lmo:lmo2068"/>
<dbReference type="PATRIC" id="fig|169963.11.peg.2116"/>
<dbReference type="eggNOG" id="COG0459">
    <property type="taxonomic scope" value="Bacteria"/>
</dbReference>
<dbReference type="HOGENOM" id="CLU_016503_3_0_9"/>
<dbReference type="OrthoDB" id="9766614at2"/>
<dbReference type="PhylomeDB" id="Q9AGE6"/>
<dbReference type="BioCyc" id="LMON169963:LMO2068-MONOMER"/>
<dbReference type="Proteomes" id="UP000000817">
    <property type="component" value="Chromosome"/>
</dbReference>
<dbReference type="GO" id="GO:1990220">
    <property type="term" value="C:GroEL-GroES complex"/>
    <property type="evidence" value="ECO:0000318"/>
    <property type="project" value="GO_Central"/>
</dbReference>
<dbReference type="GO" id="GO:0005524">
    <property type="term" value="F:ATP binding"/>
    <property type="evidence" value="ECO:0000318"/>
    <property type="project" value="GO_Central"/>
</dbReference>
<dbReference type="GO" id="GO:0140662">
    <property type="term" value="F:ATP-dependent protein folding chaperone"/>
    <property type="evidence" value="ECO:0007669"/>
    <property type="project" value="InterPro"/>
</dbReference>
<dbReference type="GO" id="GO:0016853">
    <property type="term" value="F:isomerase activity"/>
    <property type="evidence" value="ECO:0007669"/>
    <property type="project" value="UniProtKB-KW"/>
</dbReference>
<dbReference type="GO" id="GO:0051082">
    <property type="term" value="F:unfolded protein binding"/>
    <property type="evidence" value="ECO:0000318"/>
    <property type="project" value="GO_Central"/>
</dbReference>
<dbReference type="GO" id="GO:0051085">
    <property type="term" value="P:chaperone cofactor-dependent protein refolding"/>
    <property type="evidence" value="ECO:0000318"/>
    <property type="project" value="GO_Central"/>
</dbReference>
<dbReference type="GO" id="GO:0042026">
    <property type="term" value="P:protein refolding"/>
    <property type="evidence" value="ECO:0007669"/>
    <property type="project" value="UniProtKB-UniRule"/>
</dbReference>
<dbReference type="GO" id="GO:0009408">
    <property type="term" value="P:response to heat"/>
    <property type="evidence" value="ECO:0000318"/>
    <property type="project" value="GO_Central"/>
</dbReference>
<dbReference type="CDD" id="cd03344">
    <property type="entry name" value="GroEL"/>
    <property type="match status" value="1"/>
</dbReference>
<dbReference type="FunFam" id="1.10.560.10:FF:000001">
    <property type="entry name" value="60 kDa chaperonin"/>
    <property type="match status" value="1"/>
</dbReference>
<dbReference type="FunFam" id="3.50.7.10:FF:000001">
    <property type="entry name" value="60 kDa chaperonin"/>
    <property type="match status" value="1"/>
</dbReference>
<dbReference type="Gene3D" id="3.50.7.10">
    <property type="entry name" value="GroEL"/>
    <property type="match status" value="1"/>
</dbReference>
<dbReference type="Gene3D" id="1.10.560.10">
    <property type="entry name" value="GroEL-like equatorial domain"/>
    <property type="match status" value="1"/>
</dbReference>
<dbReference type="Gene3D" id="3.30.260.10">
    <property type="entry name" value="TCP-1-like chaperonin intermediate domain"/>
    <property type="match status" value="1"/>
</dbReference>
<dbReference type="HAMAP" id="MF_00600">
    <property type="entry name" value="CH60"/>
    <property type="match status" value="1"/>
</dbReference>
<dbReference type="InterPro" id="IPR018370">
    <property type="entry name" value="Chaperonin_Cpn60_CS"/>
</dbReference>
<dbReference type="InterPro" id="IPR001844">
    <property type="entry name" value="Cpn60/GroEL"/>
</dbReference>
<dbReference type="InterPro" id="IPR002423">
    <property type="entry name" value="Cpn60/GroEL/TCP-1"/>
</dbReference>
<dbReference type="InterPro" id="IPR027409">
    <property type="entry name" value="GroEL-like_apical_dom_sf"/>
</dbReference>
<dbReference type="InterPro" id="IPR027413">
    <property type="entry name" value="GROEL-like_equatorial_sf"/>
</dbReference>
<dbReference type="InterPro" id="IPR027410">
    <property type="entry name" value="TCP-1-like_intermed_sf"/>
</dbReference>
<dbReference type="NCBIfam" id="TIGR02348">
    <property type="entry name" value="GroEL"/>
    <property type="match status" value="1"/>
</dbReference>
<dbReference type="NCBIfam" id="NF000592">
    <property type="entry name" value="PRK00013.1"/>
    <property type="match status" value="1"/>
</dbReference>
<dbReference type="NCBIfam" id="NF009487">
    <property type="entry name" value="PRK12849.1"/>
    <property type="match status" value="1"/>
</dbReference>
<dbReference type="NCBIfam" id="NF009488">
    <property type="entry name" value="PRK12850.1"/>
    <property type="match status" value="1"/>
</dbReference>
<dbReference type="NCBIfam" id="NF009489">
    <property type="entry name" value="PRK12851.1"/>
    <property type="match status" value="1"/>
</dbReference>
<dbReference type="PANTHER" id="PTHR45633">
    <property type="entry name" value="60 KDA HEAT SHOCK PROTEIN, MITOCHONDRIAL"/>
    <property type="match status" value="1"/>
</dbReference>
<dbReference type="Pfam" id="PF00118">
    <property type="entry name" value="Cpn60_TCP1"/>
    <property type="match status" value="1"/>
</dbReference>
<dbReference type="PRINTS" id="PR00298">
    <property type="entry name" value="CHAPERONIN60"/>
</dbReference>
<dbReference type="SUPFAM" id="SSF52029">
    <property type="entry name" value="GroEL apical domain-like"/>
    <property type="match status" value="1"/>
</dbReference>
<dbReference type="SUPFAM" id="SSF48592">
    <property type="entry name" value="GroEL equatorial domain-like"/>
    <property type="match status" value="1"/>
</dbReference>
<dbReference type="SUPFAM" id="SSF54849">
    <property type="entry name" value="GroEL-intermediate domain like"/>
    <property type="match status" value="1"/>
</dbReference>
<dbReference type="PROSITE" id="PS00296">
    <property type="entry name" value="CHAPERONINS_CPN60"/>
    <property type="match status" value="1"/>
</dbReference>